<keyword id="KW-0112">Calmodulin-binding</keyword>
<keyword id="KW-0963">Cytoplasm</keyword>
<keyword id="KW-0206">Cytoskeleton</keyword>
<keyword id="KW-0539">Nucleus</keyword>
<keyword id="KW-1185">Reference proteome</keyword>
<keyword id="KW-0677">Repeat</keyword>
<proteinExistence type="evidence at protein level"/>
<gene>
    <name evidence="5" type="primary">IQD30</name>
    <name evidence="7" type="ordered locus">At1g18840</name>
    <name evidence="8" type="ORF">F6A14.7</name>
</gene>
<name>IQD30_ARATH</name>
<evidence type="ECO:0000250" key="1">
    <source>
        <dbReference type="UniProtKB" id="Q9SF32"/>
    </source>
</evidence>
<evidence type="ECO:0000255" key="2">
    <source>
        <dbReference type="PROSITE-ProRule" id="PRU00116"/>
    </source>
</evidence>
<evidence type="ECO:0000256" key="3">
    <source>
        <dbReference type="SAM" id="MobiDB-lite"/>
    </source>
</evidence>
<evidence type="ECO:0000269" key="4">
    <source>
    </source>
</evidence>
<evidence type="ECO:0000303" key="5">
    <source>
    </source>
</evidence>
<evidence type="ECO:0000305" key="6"/>
<evidence type="ECO:0000312" key="7">
    <source>
        <dbReference type="Araport" id="AT1G18840"/>
    </source>
</evidence>
<evidence type="ECO:0000312" key="8">
    <source>
        <dbReference type="EMBL" id="AAF27097.1"/>
    </source>
</evidence>
<feature type="chain" id="PRO_0000453135" description="Protein IQ-DOMAIN 30">
    <location>
        <begin position="1"/>
        <end position="572"/>
    </location>
</feature>
<feature type="domain" description="IQ 1" evidence="2">
    <location>
        <begin position="108"/>
        <end position="136"/>
    </location>
</feature>
<feature type="domain" description="IQ 2" evidence="2">
    <location>
        <begin position="137"/>
        <end position="154"/>
    </location>
</feature>
<feature type="region of interest" description="Disordered" evidence="3">
    <location>
        <begin position="75"/>
        <end position="96"/>
    </location>
</feature>
<feature type="region of interest" description="Calmodulin-binding" evidence="5">
    <location>
        <begin position="159"/>
        <end position="178"/>
    </location>
</feature>
<feature type="region of interest" description="Disordered" evidence="3">
    <location>
        <begin position="282"/>
        <end position="332"/>
    </location>
</feature>
<feature type="region of interest" description="Disordered" evidence="3">
    <location>
        <begin position="399"/>
        <end position="572"/>
    </location>
</feature>
<feature type="compositionally biased region" description="Polar residues" evidence="3">
    <location>
        <begin position="82"/>
        <end position="92"/>
    </location>
</feature>
<feature type="compositionally biased region" description="Polar residues" evidence="3">
    <location>
        <begin position="291"/>
        <end position="305"/>
    </location>
</feature>
<feature type="compositionally biased region" description="Polar residues" evidence="3">
    <location>
        <begin position="400"/>
        <end position="419"/>
    </location>
</feature>
<feature type="compositionally biased region" description="Basic and acidic residues" evidence="3">
    <location>
        <begin position="428"/>
        <end position="455"/>
    </location>
</feature>
<feature type="compositionally biased region" description="Polar residues" evidence="3">
    <location>
        <begin position="459"/>
        <end position="493"/>
    </location>
</feature>
<feature type="compositionally biased region" description="Polar residues" evidence="3">
    <location>
        <begin position="502"/>
        <end position="514"/>
    </location>
</feature>
<feature type="compositionally biased region" description="Polar residues" evidence="3">
    <location>
        <begin position="522"/>
        <end position="560"/>
    </location>
</feature>
<feature type="sequence conflict" description="In Ref. 3; BAH20070." evidence="6" ref="3">
    <original>R</original>
    <variation>G</variation>
    <location>
        <position position="183"/>
    </location>
</feature>
<feature type="sequence conflict" description="In Ref. 3; BAH20070." evidence="6" ref="3">
    <original>K</original>
    <variation>R</variation>
    <location>
        <position position="564"/>
    </location>
</feature>
<organism>
    <name type="scientific">Arabidopsis thaliana</name>
    <name type="common">Mouse-ear cress</name>
    <dbReference type="NCBI Taxonomy" id="3702"/>
    <lineage>
        <taxon>Eukaryota</taxon>
        <taxon>Viridiplantae</taxon>
        <taxon>Streptophyta</taxon>
        <taxon>Embryophyta</taxon>
        <taxon>Tracheophyta</taxon>
        <taxon>Spermatophyta</taxon>
        <taxon>Magnoliopsida</taxon>
        <taxon>eudicotyledons</taxon>
        <taxon>Gunneridae</taxon>
        <taxon>Pentapetalae</taxon>
        <taxon>rosids</taxon>
        <taxon>malvids</taxon>
        <taxon>Brassicales</taxon>
        <taxon>Brassicaceae</taxon>
        <taxon>Camelineae</taxon>
        <taxon>Arabidopsis</taxon>
    </lineage>
</organism>
<comment type="function">
    <text evidence="1">May be involved in cooperative interactions with calmodulins or calmodulin-like proteins (By similarity). Recruits calmodulin proteins to microtubules, thus being a potential scaffold in cellular signaling and trafficking (By similarity). May associate with nucleic acids and regulate gene expression at the transcriptional or post-transcriptional level (By similarity).</text>
</comment>
<comment type="subunit">
    <text evidence="1">Binds to multiple calmodulin (CaM) in the presence of Ca(2+) and CaM-like proteins.</text>
</comment>
<comment type="subcellular location">
    <subcellularLocation>
        <location evidence="4">Nucleus envelope</location>
    </subcellularLocation>
    <subcellularLocation>
        <location evidence="4">Cytoplasm</location>
        <location evidence="4">Cytoskeleton</location>
    </subcellularLocation>
</comment>
<comment type="similarity">
    <text evidence="6">Belongs to the IQD family.</text>
</comment>
<comment type="sequence caution" evidence="6">
    <conflict type="erroneous gene model prediction">
        <sequence resource="EMBL-CDS" id="AAF27097"/>
    </conflict>
</comment>
<dbReference type="EMBL" id="AC011809">
    <property type="protein sequence ID" value="AAF27097.1"/>
    <property type="status" value="ALT_SEQ"/>
    <property type="molecule type" value="Genomic_DNA"/>
</dbReference>
<dbReference type="EMBL" id="CP002684">
    <property type="protein sequence ID" value="AEE29769.1"/>
    <property type="molecule type" value="Genomic_DNA"/>
</dbReference>
<dbReference type="EMBL" id="CP002684">
    <property type="protein sequence ID" value="AEE29770.1"/>
    <property type="molecule type" value="Genomic_DNA"/>
</dbReference>
<dbReference type="EMBL" id="CP002684">
    <property type="protein sequence ID" value="ANM60334.1"/>
    <property type="molecule type" value="Genomic_DNA"/>
</dbReference>
<dbReference type="EMBL" id="AK317400">
    <property type="protein sequence ID" value="BAH20070.1"/>
    <property type="molecule type" value="mRNA"/>
</dbReference>
<dbReference type="EMBL" id="BT022035">
    <property type="protein sequence ID" value="AAY25447.1"/>
    <property type="molecule type" value="mRNA"/>
</dbReference>
<dbReference type="EMBL" id="AY702666">
    <property type="protein sequence ID" value="AAW22636.1"/>
    <property type="molecule type" value="mRNA"/>
</dbReference>
<dbReference type="PIR" id="C86322">
    <property type="entry name" value="C86322"/>
</dbReference>
<dbReference type="RefSeq" id="NP_001031067.1">
    <property type="nucleotide sequence ID" value="NM_001035990.2"/>
</dbReference>
<dbReference type="RefSeq" id="NP_001322630.1">
    <property type="nucleotide sequence ID" value="NM_001332375.1"/>
</dbReference>
<dbReference type="RefSeq" id="NP_173318.2">
    <property type="nucleotide sequence ID" value="NM_101741.4"/>
</dbReference>
<dbReference type="SMR" id="Q501D2"/>
<dbReference type="FunCoup" id="Q501D2">
    <property type="interactions" value="1525"/>
</dbReference>
<dbReference type="STRING" id="3702.Q501D2"/>
<dbReference type="iPTMnet" id="Q501D2"/>
<dbReference type="PaxDb" id="3702-AT1G18840.1"/>
<dbReference type="ProteomicsDB" id="174847"/>
<dbReference type="EnsemblPlants" id="AT1G18840.1">
    <property type="protein sequence ID" value="AT1G18840.1"/>
    <property type="gene ID" value="AT1G18840"/>
</dbReference>
<dbReference type="EnsemblPlants" id="AT1G18840.2">
    <property type="protein sequence ID" value="AT1G18840.2"/>
    <property type="gene ID" value="AT1G18840"/>
</dbReference>
<dbReference type="EnsemblPlants" id="AT1G18840.3">
    <property type="protein sequence ID" value="AT1G18840.3"/>
    <property type="gene ID" value="AT1G18840"/>
</dbReference>
<dbReference type="GeneID" id="838465"/>
<dbReference type="Gramene" id="AT1G18840.1">
    <property type="protein sequence ID" value="AT1G18840.1"/>
    <property type="gene ID" value="AT1G18840"/>
</dbReference>
<dbReference type="Gramene" id="AT1G18840.2">
    <property type="protein sequence ID" value="AT1G18840.2"/>
    <property type="gene ID" value="AT1G18840"/>
</dbReference>
<dbReference type="Gramene" id="AT1G18840.3">
    <property type="protein sequence ID" value="AT1G18840.3"/>
    <property type="gene ID" value="AT1G18840"/>
</dbReference>
<dbReference type="KEGG" id="ath:AT1G18840"/>
<dbReference type="Araport" id="AT1G18840"/>
<dbReference type="TAIR" id="AT1G18840">
    <property type="gene designation" value="IQD30"/>
</dbReference>
<dbReference type="eggNOG" id="ENOG502QTUQ">
    <property type="taxonomic scope" value="Eukaryota"/>
</dbReference>
<dbReference type="HOGENOM" id="CLU_026881_0_0_1"/>
<dbReference type="InParanoid" id="Q501D2"/>
<dbReference type="OMA" id="SMEDHTA"/>
<dbReference type="OrthoDB" id="1101566at2759"/>
<dbReference type="PhylomeDB" id="Q501D2"/>
<dbReference type="PRO" id="PR:Q501D2"/>
<dbReference type="Proteomes" id="UP000006548">
    <property type="component" value="Chromosome 1"/>
</dbReference>
<dbReference type="ExpressionAtlas" id="Q501D2">
    <property type="expression patterns" value="baseline and differential"/>
</dbReference>
<dbReference type="GO" id="GO:0005856">
    <property type="term" value="C:cytoskeleton"/>
    <property type="evidence" value="ECO:0007669"/>
    <property type="project" value="UniProtKB-SubCell"/>
</dbReference>
<dbReference type="GO" id="GO:0005635">
    <property type="term" value="C:nuclear envelope"/>
    <property type="evidence" value="ECO:0007669"/>
    <property type="project" value="UniProtKB-SubCell"/>
</dbReference>
<dbReference type="GO" id="GO:0000325">
    <property type="term" value="C:plant-type vacuole"/>
    <property type="evidence" value="ECO:0007005"/>
    <property type="project" value="TAIR"/>
</dbReference>
<dbReference type="GO" id="GO:0005516">
    <property type="term" value="F:calmodulin binding"/>
    <property type="evidence" value="ECO:0007669"/>
    <property type="project" value="UniProtKB-KW"/>
</dbReference>
<dbReference type="CDD" id="cd23767">
    <property type="entry name" value="IQCD"/>
    <property type="match status" value="1"/>
</dbReference>
<dbReference type="Gene3D" id="1.20.5.190">
    <property type="match status" value="1"/>
</dbReference>
<dbReference type="InterPro" id="IPR025064">
    <property type="entry name" value="DUF4005"/>
</dbReference>
<dbReference type="InterPro" id="IPR000048">
    <property type="entry name" value="IQ_motif_EF-hand-BS"/>
</dbReference>
<dbReference type="InterPro" id="IPR027417">
    <property type="entry name" value="P-loop_NTPase"/>
</dbReference>
<dbReference type="PANTHER" id="PTHR32295">
    <property type="entry name" value="IQ-DOMAIN 5-RELATED"/>
    <property type="match status" value="1"/>
</dbReference>
<dbReference type="PANTHER" id="PTHR32295:SF261">
    <property type="entry name" value="PROTEIN IQ-DOMAIN 30"/>
    <property type="match status" value="1"/>
</dbReference>
<dbReference type="Pfam" id="PF13178">
    <property type="entry name" value="DUF4005"/>
    <property type="match status" value="1"/>
</dbReference>
<dbReference type="Pfam" id="PF00612">
    <property type="entry name" value="IQ"/>
    <property type="match status" value="2"/>
</dbReference>
<dbReference type="SMART" id="SM00015">
    <property type="entry name" value="IQ"/>
    <property type="match status" value="2"/>
</dbReference>
<dbReference type="SUPFAM" id="SSF52540">
    <property type="entry name" value="P-loop containing nucleoside triphosphate hydrolases"/>
    <property type="match status" value="1"/>
</dbReference>
<dbReference type="PROSITE" id="PS50096">
    <property type="entry name" value="IQ"/>
    <property type="match status" value="2"/>
</dbReference>
<protein>
    <recommendedName>
        <fullName evidence="5">Protein IQ-DOMAIN 30</fullName>
        <shortName evidence="5">AtIQD30</shortName>
    </recommendedName>
</protein>
<reference key="1">
    <citation type="journal article" date="2000" name="Nature">
        <title>Sequence and analysis of chromosome 1 of the plant Arabidopsis thaliana.</title>
        <authorList>
            <person name="Theologis A."/>
            <person name="Ecker J.R."/>
            <person name="Palm C.J."/>
            <person name="Federspiel N.A."/>
            <person name="Kaul S."/>
            <person name="White O."/>
            <person name="Alonso J."/>
            <person name="Altafi H."/>
            <person name="Araujo R."/>
            <person name="Bowman C.L."/>
            <person name="Brooks S.Y."/>
            <person name="Buehler E."/>
            <person name="Chan A."/>
            <person name="Chao Q."/>
            <person name="Chen H."/>
            <person name="Cheuk R.F."/>
            <person name="Chin C.W."/>
            <person name="Chung M.K."/>
            <person name="Conn L."/>
            <person name="Conway A.B."/>
            <person name="Conway A.R."/>
            <person name="Creasy T.H."/>
            <person name="Dewar K."/>
            <person name="Dunn P."/>
            <person name="Etgu P."/>
            <person name="Feldblyum T.V."/>
            <person name="Feng J.-D."/>
            <person name="Fong B."/>
            <person name="Fujii C.Y."/>
            <person name="Gill J.E."/>
            <person name="Goldsmith A.D."/>
            <person name="Haas B."/>
            <person name="Hansen N.F."/>
            <person name="Hughes B."/>
            <person name="Huizar L."/>
            <person name="Hunter J.L."/>
            <person name="Jenkins J."/>
            <person name="Johnson-Hopson C."/>
            <person name="Khan S."/>
            <person name="Khaykin E."/>
            <person name="Kim C.J."/>
            <person name="Koo H.L."/>
            <person name="Kremenetskaia I."/>
            <person name="Kurtz D.B."/>
            <person name="Kwan A."/>
            <person name="Lam B."/>
            <person name="Langin-Hooper S."/>
            <person name="Lee A."/>
            <person name="Lee J.M."/>
            <person name="Lenz C.A."/>
            <person name="Li J.H."/>
            <person name="Li Y.-P."/>
            <person name="Lin X."/>
            <person name="Liu S.X."/>
            <person name="Liu Z.A."/>
            <person name="Luros J.S."/>
            <person name="Maiti R."/>
            <person name="Marziali A."/>
            <person name="Militscher J."/>
            <person name="Miranda M."/>
            <person name="Nguyen M."/>
            <person name="Nierman W.C."/>
            <person name="Osborne B.I."/>
            <person name="Pai G."/>
            <person name="Peterson J."/>
            <person name="Pham P.K."/>
            <person name="Rizzo M."/>
            <person name="Rooney T."/>
            <person name="Rowley D."/>
            <person name="Sakano H."/>
            <person name="Salzberg S.L."/>
            <person name="Schwartz J.R."/>
            <person name="Shinn P."/>
            <person name="Southwick A.M."/>
            <person name="Sun H."/>
            <person name="Tallon L.J."/>
            <person name="Tambunga G."/>
            <person name="Toriumi M.J."/>
            <person name="Town C.D."/>
            <person name="Utterback T."/>
            <person name="Van Aken S."/>
            <person name="Vaysberg M."/>
            <person name="Vysotskaia V.S."/>
            <person name="Walker M."/>
            <person name="Wu D."/>
            <person name="Yu G."/>
            <person name="Fraser C.M."/>
            <person name="Venter J.C."/>
            <person name="Davis R.W."/>
        </authorList>
    </citation>
    <scope>NUCLEOTIDE SEQUENCE [LARGE SCALE GENOMIC DNA]</scope>
    <source>
        <strain>cv. Columbia</strain>
    </source>
</reference>
<reference key="2">
    <citation type="journal article" date="2017" name="Plant J.">
        <title>Araport11: a complete reannotation of the Arabidopsis thaliana reference genome.</title>
        <authorList>
            <person name="Cheng C.Y."/>
            <person name="Krishnakumar V."/>
            <person name="Chan A.P."/>
            <person name="Thibaud-Nissen F."/>
            <person name="Schobel S."/>
            <person name="Town C.D."/>
        </authorList>
    </citation>
    <scope>GENOME REANNOTATION</scope>
    <source>
        <strain>cv. Columbia</strain>
    </source>
</reference>
<reference key="3">
    <citation type="journal article" date="2009" name="DNA Res.">
        <title>Analysis of multiple occurrences of alternative splicing events in Arabidopsis thaliana using novel sequenced full-length cDNAs.</title>
        <authorList>
            <person name="Iida K."/>
            <person name="Fukami-Kobayashi K."/>
            <person name="Toyoda A."/>
            <person name="Sakaki Y."/>
            <person name="Kobayashi M."/>
            <person name="Seki M."/>
            <person name="Shinozaki K."/>
        </authorList>
    </citation>
    <scope>NUCLEOTIDE SEQUENCE [LARGE SCALE MRNA]</scope>
    <source>
        <strain>cv. Columbia</strain>
        <tissue>Flower</tissue>
        <tissue>Silique</tissue>
    </source>
</reference>
<reference key="4">
    <citation type="submission" date="2005-05" db="EMBL/GenBank/DDBJ databases">
        <title>Arabidopsis ORF clones.</title>
        <authorList>
            <person name="Cheuk R.F."/>
            <person name="Chen H."/>
            <person name="Kim C.J."/>
            <person name="Shinn P."/>
            <person name="Ecker J.R."/>
        </authorList>
    </citation>
    <scope>NUCLEOTIDE SEQUENCE [LARGE SCALE MRNA]</scope>
    <source>
        <strain>cv. Columbia</strain>
    </source>
</reference>
<reference key="5">
    <citation type="journal article" date="2005" name="BMC Evol. Biol.">
        <title>Genome-wide comparative analysis of the IQD gene families in Arabidopsis thaliana and Oryza sativa.</title>
        <authorList>
            <person name="Abel S."/>
            <person name="Savchenko T."/>
            <person name="Levy M."/>
        </authorList>
    </citation>
    <scope>NUCLEOTIDE SEQUENCE [MRNA] OF 1-563</scope>
    <scope>INTERACTION WITH CALMODULIN</scope>
    <scope>GENE FAMILY</scope>
    <scope>NOMENCLATURE</scope>
    <source>
        <strain>cv. Columbia</strain>
    </source>
</reference>
<reference key="6">
    <citation type="journal article" date="2017" name="Plant Physiol.">
        <title>The IQD family of calmodulin-binding proteins links calcium signaling to microtubules, membrane subdomains, and the nucleus.</title>
        <authorList>
            <person name="Buerstenbinder K."/>
            <person name="Moeller B."/>
            <person name="Ploetner R."/>
            <person name="Stamm G."/>
            <person name="Hause G."/>
            <person name="Mitra D."/>
            <person name="Abel S."/>
        </authorList>
    </citation>
    <scope>SUBCELLULAR LOCATION</scope>
    <source>
        <strain>cv. Columbia</strain>
    </source>
</reference>
<reference key="7">
    <citation type="journal article" date="2017" name="Plant Signal. Behav.">
        <title>Functions of IQD proteins as hubs in cellular calcium and auxin signaling: A toolbox for shape formation and tissue-specification in plants?</title>
        <authorList>
            <person name="Buerstenbinder K."/>
            <person name="Mitra D."/>
            <person name="Quegwer J."/>
        </authorList>
    </citation>
    <scope>REVIEW</scope>
</reference>
<accession>Q501D2</accession>
<accession>B9DH53</accession>
<accession>Q2NND8</accession>
<accession>Q9M9V3</accession>
<sequence>MGKPARWLKSVLLGKKPSKSSGSKDKERIVNGKEVVVISKIEESDVVSDLSSIGNAAVYTSGIVETQNLKHEDVSDDEIQVSEVQPTDSQDVASVPDDSLSESEKIQQEIAAVTVQAAYRGYLARRAFKILKGIIRLQALIRGHMVRRQAVSTLCCVMGIVRLQALARGREIRHSDIGVEVQRKCHLHHQPLENKANSVVDTHSYLGINKLTGNAFAQKLLASSPNVLPLSLDNDSSNSIWLENWSASCFWKPVPQPKKASLRKSQKKFASNPQIVEAEFARPKKSVRKVPSSNLDNSSVAQTSSELEKPKRSFRKVSTSQSVEPLPSMDNPQVDLEKVKRGLRKVHNPVVENSIQPQLVPQIAVEKPNGSLEESVNAFDEEKEDEVAETVVQQPEELIQTHTPLGTNESLDSTLVNQIEESEENVMAEEKEDVKEERTPKQNHKENSAGKENQKSGKKASSVTATQTAEFQESGNGNQTSSPGIPSYMQATKSAKAKLRLQGSSSPRQLGTTEKASRRYSLPSSGNSAKITSHSPKTRVSNSSGKSGNKTEKTLLSSREGNGKATPVEWKR</sequence>